<feature type="chain" id="PRO_0000333343" description="Inclusion body clearance protein iml2">
    <location>
        <begin position="1"/>
        <end position="691"/>
    </location>
</feature>
<feature type="region of interest" description="Disordered" evidence="2">
    <location>
        <begin position="170"/>
        <end position="230"/>
    </location>
</feature>
<name>IML2_ASPTN</name>
<accession>Q0D1F8</accession>
<evidence type="ECO:0000250" key="1">
    <source>
        <dbReference type="UniProtKB" id="P47031"/>
    </source>
</evidence>
<evidence type="ECO:0000256" key="2">
    <source>
        <dbReference type="SAM" id="MobiDB-lite"/>
    </source>
</evidence>
<evidence type="ECO:0000305" key="3"/>
<sequence length="691" mass="77624">MFKVGSWLYGKKPGTASTQSLDSLTELRDSATLILNDDVDGAEDGLSEGISSFHNLGRGVVAFIRATLGFEQEIMRQASERLNIAETSAASDQHKAQHNSHAPNTYHSQIYVPGTEFALCQAMAQLMSAVVGVLNESLTESIKGFYKMRKAYITLDGILKMEQKFMQMKRSGELSPPELAQSSSRSSGQGADAKSNPTTPVEAGGLSQKLSELNVSREPTDSDMSVETSSEMLSHDPDSDIFRNQIDVFVHSGANFCFGILLLLISMVPPAFSKLLGIIGFHGDKERGLKMLWQASKFHNLIGAIAAFAMLGYYNGFVRYCDIMPDPVSREEGDVQAYPQERLEALLAKMRKQFPKSQLWLLEESRMEGANKNLERALELLCGEERSPLKQVEALRVFERSLNAMYLHRYQLCSESFIECVDLNSWSRSLYYYIAGAAHVSLYRSALGKDASEATKHAEQATEYFRTAPPLAGKKRFMARQLPFDVFVARKIAKWEARAKEWKVPLVDAVGVDPIEEMIFFWNGHSRMTQAHLEESLQHLAWSESDANKHWSREGPEEKAILQLVRAAVLRSMRKHSEAKDLLQRGILDHDKSLFVGHLKDNWIGPAAHFEMAANLWMERPTYIEIHGGPDEENPGEDAHQLERNKVRQCKEYLEKAARWESYELDARIGLKVTAALEAVHKWETAHSATS</sequence>
<reference key="1">
    <citation type="submission" date="2005-09" db="EMBL/GenBank/DDBJ databases">
        <title>Annotation of the Aspergillus terreus NIH2624 genome.</title>
        <authorList>
            <person name="Birren B.W."/>
            <person name="Lander E.S."/>
            <person name="Galagan J.E."/>
            <person name="Nusbaum C."/>
            <person name="Devon K."/>
            <person name="Henn M."/>
            <person name="Ma L.-J."/>
            <person name="Jaffe D.B."/>
            <person name="Butler J."/>
            <person name="Alvarez P."/>
            <person name="Gnerre S."/>
            <person name="Grabherr M."/>
            <person name="Kleber M."/>
            <person name="Mauceli E.W."/>
            <person name="Brockman W."/>
            <person name="Rounsley S."/>
            <person name="Young S.K."/>
            <person name="LaButti K."/>
            <person name="Pushparaj V."/>
            <person name="DeCaprio D."/>
            <person name="Crawford M."/>
            <person name="Koehrsen M."/>
            <person name="Engels R."/>
            <person name="Montgomery P."/>
            <person name="Pearson M."/>
            <person name="Howarth C."/>
            <person name="Larson L."/>
            <person name="Luoma S."/>
            <person name="White J."/>
            <person name="Alvarado L."/>
            <person name="Kodira C.D."/>
            <person name="Zeng Q."/>
            <person name="Oleary S."/>
            <person name="Yandava C."/>
            <person name="Denning D.W."/>
            <person name="Nierman W.C."/>
            <person name="Milne T."/>
            <person name="Madden K."/>
        </authorList>
    </citation>
    <scope>NUCLEOTIDE SEQUENCE [LARGE SCALE GENOMIC DNA]</scope>
    <source>
        <strain>NIH 2624 / FGSC A1156</strain>
    </source>
</reference>
<proteinExistence type="inferred from homology"/>
<dbReference type="EMBL" id="CH476594">
    <property type="protein sequence ID" value="EAU38872.1"/>
    <property type="molecule type" value="Genomic_DNA"/>
</dbReference>
<dbReference type="RefSeq" id="XP_001210312.1">
    <property type="nucleotide sequence ID" value="XM_001210312.1"/>
</dbReference>
<dbReference type="EnsemblFungi" id="EAU38872">
    <property type="protein sequence ID" value="EAU38872"/>
    <property type="gene ID" value="ATEG_00226"/>
</dbReference>
<dbReference type="GeneID" id="4354975"/>
<dbReference type="VEuPathDB" id="FungiDB:ATEG_00226"/>
<dbReference type="eggNOG" id="KOG3783">
    <property type="taxonomic scope" value="Eukaryota"/>
</dbReference>
<dbReference type="HOGENOM" id="CLU_014926_1_0_1"/>
<dbReference type="OMA" id="AFHSDIY"/>
<dbReference type="OrthoDB" id="2154985at2759"/>
<dbReference type="Proteomes" id="UP000007963">
    <property type="component" value="Unassembled WGS sequence"/>
</dbReference>
<dbReference type="GO" id="GO:0005829">
    <property type="term" value="C:cytosol"/>
    <property type="evidence" value="ECO:0007669"/>
    <property type="project" value="TreeGrafter"/>
</dbReference>
<dbReference type="GO" id="GO:0005741">
    <property type="term" value="C:mitochondrial outer membrane"/>
    <property type="evidence" value="ECO:0007669"/>
    <property type="project" value="TreeGrafter"/>
</dbReference>
<dbReference type="GO" id="GO:0005634">
    <property type="term" value="C:nucleus"/>
    <property type="evidence" value="ECO:0007669"/>
    <property type="project" value="UniProtKB-SubCell"/>
</dbReference>
<dbReference type="InterPro" id="IPR019412">
    <property type="entry name" value="Iml2/TPR_39"/>
</dbReference>
<dbReference type="PANTHER" id="PTHR31859">
    <property type="entry name" value="TETRATRICOPEPTIDE REPEAT PROTEIN 39 FAMILY MEMBER"/>
    <property type="match status" value="1"/>
</dbReference>
<dbReference type="PANTHER" id="PTHR31859:SF1">
    <property type="entry name" value="TETRATRICOPEPTIDE REPEAT PROTEIN 39C"/>
    <property type="match status" value="1"/>
</dbReference>
<dbReference type="Pfam" id="PF10300">
    <property type="entry name" value="Iml2-TPR_39"/>
    <property type="match status" value="1"/>
</dbReference>
<comment type="function">
    <text evidence="1">Inclusion body (IB) resident protein that interacts strongly with lipid droplet (LD) proteins. Involved in LD-mediated IB clearing after protein folding stress, probably by enabling access to the IBs of an LD-stored soluble sterol derivative that acts as a chaperone in inclusion clearing.</text>
</comment>
<comment type="subunit">
    <text evidence="1">Interacts with lipid droplet proteins.</text>
</comment>
<comment type="subcellular location">
    <subcellularLocation>
        <location evidence="1">Cytoplasm</location>
    </subcellularLocation>
    <subcellularLocation>
        <location evidence="1">Nucleus</location>
    </subcellularLocation>
    <text evidence="1">Localized exclusively in cytoplasmic inclusion bodies under protein folding stress conditions.</text>
</comment>
<comment type="similarity">
    <text evidence="3">Belongs to the IML2 family.</text>
</comment>
<organism>
    <name type="scientific">Aspergillus terreus (strain NIH 2624 / FGSC A1156)</name>
    <dbReference type="NCBI Taxonomy" id="341663"/>
    <lineage>
        <taxon>Eukaryota</taxon>
        <taxon>Fungi</taxon>
        <taxon>Dikarya</taxon>
        <taxon>Ascomycota</taxon>
        <taxon>Pezizomycotina</taxon>
        <taxon>Eurotiomycetes</taxon>
        <taxon>Eurotiomycetidae</taxon>
        <taxon>Eurotiales</taxon>
        <taxon>Aspergillaceae</taxon>
        <taxon>Aspergillus</taxon>
        <taxon>Aspergillus subgen. Circumdati</taxon>
    </lineage>
</organism>
<protein>
    <recommendedName>
        <fullName>Inclusion body clearance protein iml2</fullName>
    </recommendedName>
</protein>
<gene>
    <name type="primary">iml2</name>
    <name type="ORF">ATEG_00226</name>
</gene>
<keyword id="KW-0963">Cytoplasm</keyword>
<keyword id="KW-0539">Nucleus</keyword>
<keyword id="KW-0597">Phosphoprotein</keyword>
<keyword id="KW-1185">Reference proteome</keyword>